<gene>
    <name evidence="1" type="primary">frr</name>
    <name type="ordered locus">PAM_168</name>
</gene>
<name>RRF_ONYPE</name>
<accession>P61308</accession>
<keyword id="KW-0963">Cytoplasm</keyword>
<keyword id="KW-0648">Protein biosynthesis</keyword>
<comment type="function">
    <text evidence="1">Responsible for the release of ribosomes from messenger RNA at the termination of protein biosynthesis. May increase the efficiency of translation by recycling ribosomes from one round of translation to another.</text>
</comment>
<comment type="subcellular location">
    <subcellularLocation>
        <location evidence="1">Cytoplasm</location>
    </subcellularLocation>
</comment>
<comment type="similarity">
    <text evidence="1">Belongs to the RRF family.</text>
</comment>
<reference key="1">
    <citation type="journal article" date="2004" name="Nat. Genet.">
        <title>Reductive evolution suggested from the complete genome sequence of a plant-pathogenic phytoplasma.</title>
        <authorList>
            <person name="Oshima K."/>
            <person name="Kakizawa S."/>
            <person name="Nishigawa H."/>
            <person name="Jung H.-Y."/>
            <person name="Wei W."/>
            <person name="Suzuki S."/>
            <person name="Arashida R."/>
            <person name="Nakata D."/>
            <person name="Miyata S."/>
            <person name="Ugaki M."/>
            <person name="Namba S."/>
        </authorList>
    </citation>
    <scope>NUCLEOTIDE SEQUENCE [LARGE SCALE GENOMIC DNA]</scope>
    <source>
        <strain>OY-M</strain>
    </source>
</reference>
<organism>
    <name type="scientific">Onion yellows phytoplasma (strain OY-M)</name>
    <dbReference type="NCBI Taxonomy" id="262768"/>
    <lineage>
        <taxon>Bacteria</taxon>
        <taxon>Bacillati</taxon>
        <taxon>Mycoplasmatota</taxon>
        <taxon>Mollicutes</taxon>
        <taxon>Acholeplasmatales</taxon>
        <taxon>Acholeplasmataceae</taxon>
        <taxon>Candidatus Phytoplasma</taxon>
        <taxon>16SrI (Aster yellows group)</taxon>
    </lineage>
</organism>
<dbReference type="EMBL" id="AP006628">
    <property type="protein sequence ID" value="BAD04253.1"/>
    <property type="molecule type" value="Genomic_DNA"/>
</dbReference>
<dbReference type="SMR" id="P61308"/>
<dbReference type="STRING" id="262768.PAM_168"/>
<dbReference type="KEGG" id="poy:PAM_168"/>
<dbReference type="eggNOG" id="COG0233">
    <property type="taxonomic scope" value="Bacteria"/>
</dbReference>
<dbReference type="HOGENOM" id="CLU_073981_2_0_14"/>
<dbReference type="BioCyc" id="OYEL262768:G1G26-207-MONOMER"/>
<dbReference type="Proteomes" id="UP000002523">
    <property type="component" value="Chromosome"/>
</dbReference>
<dbReference type="GO" id="GO:0005737">
    <property type="term" value="C:cytoplasm"/>
    <property type="evidence" value="ECO:0007669"/>
    <property type="project" value="UniProtKB-SubCell"/>
</dbReference>
<dbReference type="GO" id="GO:0043023">
    <property type="term" value="F:ribosomal large subunit binding"/>
    <property type="evidence" value="ECO:0007669"/>
    <property type="project" value="TreeGrafter"/>
</dbReference>
<dbReference type="GO" id="GO:0006415">
    <property type="term" value="P:translational termination"/>
    <property type="evidence" value="ECO:0007669"/>
    <property type="project" value="UniProtKB-UniRule"/>
</dbReference>
<dbReference type="FunFam" id="3.30.1360.40:FF:000001">
    <property type="entry name" value="Ribosome-recycling factor"/>
    <property type="match status" value="1"/>
</dbReference>
<dbReference type="Gene3D" id="3.30.1360.40">
    <property type="match status" value="1"/>
</dbReference>
<dbReference type="Gene3D" id="1.10.132.20">
    <property type="entry name" value="Ribosome-recycling factor"/>
    <property type="match status" value="1"/>
</dbReference>
<dbReference type="HAMAP" id="MF_00040">
    <property type="entry name" value="RRF"/>
    <property type="match status" value="1"/>
</dbReference>
<dbReference type="InterPro" id="IPR002661">
    <property type="entry name" value="Ribosome_recyc_fac"/>
</dbReference>
<dbReference type="InterPro" id="IPR023584">
    <property type="entry name" value="Ribosome_recyc_fac_dom"/>
</dbReference>
<dbReference type="InterPro" id="IPR036191">
    <property type="entry name" value="RRF_sf"/>
</dbReference>
<dbReference type="NCBIfam" id="TIGR00496">
    <property type="entry name" value="frr"/>
    <property type="match status" value="1"/>
</dbReference>
<dbReference type="PANTHER" id="PTHR20982:SF3">
    <property type="entry name" value="MITOCHONDRIAL RIBOSOME RECYCLING FACTOR PSEUDO 1"/>
    <property type="match status" value="1"/>
</dbReference>
<dbReference type="PANTHER" id="PTHR20982">
    <property type="entry name" value="RIBOSOME RECYCLING FACTOR"/>
    <property type="match status" value="1"/>
</dbReference>
<dbReference type="Pfam" id="PF01765">
    <property type="entry name" value="RRF"/>
    <property type="match status" value="1"/>
</dbReference>
<dbReference type="SUPFAM" id="SSF55194">
    <property type="entry name" value="Ribosome recycling factor, RRF"/>
    <property type="match status" value="1"/>
</dbReference>
<proteinExistence type="inferred from homology"/>
<feature type="chain" id="PRO_0000167507" description="Ribosome-recycling factor">
    <location>
        <begin position="1"/>
        <end position="184"/>
    </location>
</feature>
<evidence type="ECO:0000255" key="1">
    <source>
        <dbReference type="HAMAP-Rule" id="MF_00040"/>
    </source>
</evidence>
<sequence length="184" mass="20799">MQQLAKDILASLETKMTQAQEVMLKNFCDIRTGTANPNILDKITVNYYGAPTFLKTLASISVSEGNQLNIKPYDSTLIPNIKKVLLASNLGITPQTDGLVVRLVFPKPTEERRKALMKEVEQLAEKTKVAIRNVRREGNDKIKKVELTKDLETFYLNQIQTLTDKNIKLIEKHTTTKNTELLKA</sequence>
<protein>
    <recommendedName>
        <fullName evidence="1">Ribosome-recycling factor</fullName>
        <shortName evidence="1">RRF</shortName>
    </recommendedName>
    <alternativeName>
        <fullName evidence="1">Ribosome-releasing factor</fullName>
    </alternativeName>
</protein>